<evidence type="ECO:0000250" key="1">
    <source>
        <dbReference type="UniProtKB" id="P21462"/>
    </source>
</evidence>
<evidence type="ECO:0000255" key="2"/>
<evidence type="ECO:0000255" key="3">
    <source>
        <dbReference type="PROSITE-ProRule" id="PRU00521"/>
    </source>
</evidence>
<evidence type="ECO:0000269" key="4">
    <source>
    </source>
</evidence>
<evidence type="ECO:0000303" key="5">
    <source>
    </source>
</evidence>
<feature type="chain" id="PRO_0000069449" description="fMet-Leu-Phe receptor">
    <location>
        <begin position="1"/>
        <end position="352"/>
    </location>
</feature>
<feature type="topological domain" description="Extracellular" evidence="2">
    <location>
        <begin position="1"/>
        <end position="27"/>
    </location>
</feature>
<feature type="transmembrane region" description="Helical; Name=1" evidence="2">
    <location>
        <begin position="28"/>
        <end position="50"/>
    </location>
</feature>
<feature type="topological domain" description="Cytoplasmic" evidence="2">
    <location>
        <begin position="51"/>
        <end position="61"/>
    </location>
</feature>
<feature type="transmembrane region" description="Helical; Name=2" evidence="2">
    <location>
        <begin position="62"/>
        <end position="83"/>
    </location>
</feature>
<feature type="topological domain" description="Extracellular" evidence="2">
    <location>
        <begin position="84"/>
        <end position="100"/>
    </location>
</feature>
<feature type="transmembrane region" description="Helical; Name=3" evidence="2">
    <location>
        <begin position="101"/>
        <end position="121"/>
    </location>
</feature>
<feature type="topological domain" description="Cytoplasmic" evidence="2">
    <location>
        <begin position="122"/>
        <end position="140"/>
    </location>
</feature>
<feature type="transmembrane region" description="Helical; Name=4" evidence="2">
    <location>
        <begin position="141"/>
        <end position="162"/>
    </location>
</feature>
<feature type="topological domain" description="Extracellular" evidence="2">
    <location>
        <begin position="163"/>
        <end position="207"/>
    </location>
</feature>
<feature type="transmembrane region" description="Helical; Name=5" evidence="2">
    <location>
        <begin position="208"/>
        <end position="228"/>
    </location>
</feature>
<feature type="topological domain" description="Cytoplasmic" evidence="2">
    <location>
        <begin position="229"/>
        <end position="244"/>
    </location>
</feature>
<feature type="transmembrane region" description="Helical; Name=6" evidence="2">
    <location>
        <begin position="245"/>
        <end position="268"/>
    </location>
</feature>
<feature type="topological domain" description="Extracellular" evidence="2">
    <location>
        <begin position="269"/>
        <end position="287"/>
    </location>
</feature>
<feature type="transmembrane region" description="Helical; Name=7" evidence="2">
    <location>
        <begin position="288"/>
        <end position="307"/>
    </location>
</feature>
<feature type="topological domain" description="Cytoplasmic" evidence="2">
    <location>
        <begin position="308"/>
        <end position="352"/>
    </location>
</feature>
<feature type="glycosylation site" description="N-linked (GlcNAc...) asparagine" evidence="2">
    <location>
        <position position="4"/>
    </location>
</feature>
<feature type="glycosylation site" description="N-linked (GlcNAc...) asparagine" evidence="2">
    <location>
        <position position="10"/>
    </location>
</feature>
<feature type="disulfide bond" evidence="3">
    <location>
        <begin position="98"/>
        <end position="178"/>
    </location>
</feature>
<protein>
    <recommendedName>
        <fullName>fMet-Leu-Phe receptor</fullName>
        <shortName>fMLP receptor</shortName>
    </recommendedName>
    <alternativeName>
        <fullName>N-formyl peptide receptor</fullName>
        <shortName>FPR</shortName>
    </alternativeName>
    <alternativeName>
        <fullName>N-formylpeptide chemoattractant receptor</fullName>
    </alternativeName>
</protein>
<reference key="1">
    <citation type="journal article" date="1993" name="J. Immunol.">
        <title>The rabbit neutrophil N-formyl peptide receptor. cDNA cloning, expression, and structure/function implications.</title>
        <authorList>
            <person name="Ye R.D."/>
            <person name="Quehenberger O."/>
            <person name="Thomas K.M."/>
            <person name="Navarro J."/>
            <person name="Cavanagh S.L."/>
            <person name="Prossnitz E.R."/>
            <person name="Cochrane C.G."/>
        </authorList>
    </citation>
    <scope>NUCLEOTIDE SEQUENCE [MRNA]</scope>
    <scope>FUNCTION</scope>
    <scope>SUBCELLULAR LOCATION</scope>
    <scope>TISSUE SPECIFICITY</scope>
    <source>
        <strain>New Zealand white</strain>
        <tissue>Neutrophil</tissue>
    </source>
</reference>
<dbReference type="EMBL" id="M94549">
    <property type="protein sequence ID" value="AAA31254.1"/>
    <property type="molecule type" value="mRNA"/>
</dbReference>
<dbReference type="PIR" id="A46520">
    <property type="entry name" value="A46520"/>
</dbReference>
<dbReference type="RefSeq" id="NP_001075783.1">
    <property type="nucleotide sequence ID" value="NM_001082314.1"/>
</dbReference>
<dbReference type="SMR" id="Q05394"/>
<dbReference type="FunCoup" id="Q05394">
    <property type="interactions" value="100"/>
</dbReference>
<dbReference type="STRING" id="9986.ENSOCUP00000007429"/>
<dbReference type="GlyCosmos" id="Q05394">
    <property type="glycosylation" value="2 sites, No reported glycans"/>
</dbReference>
<dbReference type="PaxDb" id="9986-ENSOCUP00000007429"/>
<dbReference type="GeneID" id="100009153"/>
<dbReference type="KEGG" id="ocu:100009153"/>
<dbReference type="CTD" id="2357"/>
<dbReference type="eggNOG" id="KOG3656">
    <property type="taxonomic scope" value="Eukaryota"/>
</dbReference>
<dbReference type="InParanoid" id="Q05394"/>
<dbReference type="OrthoDB" id="6088892at2759"/>
<dbReference type="Proteomes" id="UP000001811">
    <property type="component" value="Unplaced"/>
</dbReference>
<dbReference type="GO" id="GO:0005886">
    <property type="term" value="C:plasma membrane"/>
    <property type="evidence" value="ECO:0007669"/>
    <property type="project" value="UniProtKB-SubCell"/>
</dbReference>
<dbReference type="GO" id="GO:0004875">
    <property type="term" value="F:complement receptor activity"/>
    <property type="evidence" value="ECO:0007669"/>
    <property type="project" value="TreeGrafter"/>
</dbReference>
<dbReference type="GO" id="GO:0004930">
    <property type="term" value="F:G protein-coupled receptor activity"/>
    <property type="evidence" value="ECO:0000250"/>
    <property type="project" value="UniProtKB"/>
</dbReference>
<dbReference type="GO" id="GO:0004982">
    <property type="term" value="F:N-formyl peptide receptor activity"/>
    <property type="evidence" value="ECO:0007669"/>
    <property type="project" value="TreeGrafter"/>
</dbReference>
<dbReference type="GO" id="GO:0006935">
    <property type="term" value="P:chemotaxis"/>
    <property type="evidence" value="ECO:0007669"/>
    <property type="project" value="UniProtKB-KW"/>
</dbReference>
<dbReference type="GO" id="GO:0006954">
    <property type="term" value="P:inflammatory response"/>
    <property type="evidence" value="ECO:0007669"/>
    <property type="project" value="TreeGrafter"/>
</dbReference>
<dbReference type="GO" id="GO:0007200">
    <property type="term" value="P:phospholipase C-activating G protein-coupled receptor signaling pathway"/>
    <property type="evidence" value="ECO:0007669"/>
    <property type="project" value="TreeGrafter"/>
</dbReference>
<dbReference type="GO" id="GO:0007204">
    <property type="term" value="P:positive regulation of cytosolic calcium ion concentration"/>
    <property type="evidence" value="ECO:0007669"/>
    <property type="project" value="TreeGrafter"/>
</dbReference>
<dbReference type="FunFam" id="1.20.1070.10:FF:000034">
    <property type="entry name" value="G-protein coupled receptor 1"/>
    <property type="match status" value="1"/>
</dbReference>
<dbReference type="Gene3D" id="1.20.1070.10">
    <property type="entry name" value="Rhodopsin 7-helix transmembrane proteins"/>
    <property type="match status" value="1"/>
</dbReference>
<dbReference type="InterPro" id="IPR000826">
    <property type="entry name" value="Formyl_rcpt-rel"/>
</dbReference>
<dbReference type="InterPro" id="IPR000276">
    <property type="entry name" value="GPCR_Rhodpsn"/>
</dbReference>
<dbReference type="InterPro" id="IPR017452">
    <property type="entry name" value="GPCR_Rhodpsn_7TM"/>
</dbReference>
<dbReference type="PANTHER" id="PTHR24225">
    <property type="entry name" value="CHEMOTACTIC RECEPTOR"/>
    <property type="match status" value="1"/>
</dbReference>
<dbReference type="PANTHER" id="PTHR24225:SF15">
    <property type="entry name" value="FMET-LEU-PHE RECEPTOR"/>
    <property type="match status" value="1"/>
</dbReference>
<dbReference type="Pfam" id="PF00001">
    <property type="entry name" value="7tm_1"/>
    <property type="match status" value="1"/>
</dbReference>
<dbReference type="PRINTS" id="PR00526">
    <property type="entry name" value="FMETLEUPHER"/>
</dbReference>
<dbReference type="PRINTS" id="PR00237">
    <property type="entry name" value="GPCRRHODOPSN"/>
</dbReference>
<dbReference type="SUPFAM" id="SSF81321">
    <property type="entry name" value="Family A G protein-coupled receptor-like"/>
    <property type="match status" value="1"/>
</dbReference>
<dbReference type="PROSITE" id="PS00237">
    <property type="entry name" value="G_PROTEIN_RECEP_F1_1"/>
    <property type="match status" value="1"/>
</dbReference>
<dbReference type="PROSITE" id="PS50262">
    <property type="entry name" value="G_PROTEIN_RECEP_F1_2"/>
    <property type="match status" value="1"/>
</dbReference>
<comment type="function">
    <text evidence="1 4 5">High affinity receptor for N-formyl-methionyl peptides (fMLP), which are powerful neutrophil chemotactic factors. Binding of fMLP to the receptor stimulates intracellular calcium mobilization and superoxide anion release. This response is mediated via a G-protein that activates a phosphatidylinositol-calcium second messenger system. Receptor for TAFA4, mediates its effects on chemoattracting macrophages, promoting phagocytosis and increasing ROS release (By similarity). Receptor for cathepsin CTSG, leading to increased phagocyte chemotaxis (By similarity).</text>
</comment>
<comment type="subcellular location">
    <subcellularLocation>
        <location evidence="4">Cell membrane</location>
        <topology evidence="2">Multi-pass membrane protein</topology>
    </subcellularLocation>
    <text evidence="1">Internalizes in presence of its ligand, TAFA4.</text>
</comment>
<comment type="tissue specificity">
    <text evidence="4">Neutrophils.</text>
</comment>
<comment type="PTM">
    <text evidence="1">Phosphorylated; which is necessary for desensitization.</text>
</comment>
<comment type="similarity">
    <text evidence="3">Belongs to the G-protein coupled receptor 1 family.</text>
</comment>
<gene>
    <name type="primary">FPR1</name>
</gene>
<keyword id="KW-1003">Cell membrane</keyword>
<keyword id="KW-0145">Chemotaxis</keyword>
<keyword id="KW-1015">Disulfide bond</keyword>
<keyword id="KW-0297">G-protein coupled receptor</keyword>
<keyword id="KW-0325">Glycoprotein</keyword>
<keyword id="KW-0472">Membrane</keyword>
<keyword id="KW-0597">Phosphoprotein</keyword>
<keyword id="KW-0675">Receptor</keyword>
<keyword id="KW-1185">Reference proteome</keyword>
<keyword id="KW-0807">Transducer</keyword>
<keyword id="KW-0812">Transmembrane</keyword>
<keyword id="KW-1133">Transmembrane helix</keyword>
<organism>
    <name type="scientific">Oryctolagus cuniculus</name>
    <name type="common">Rabbit</name>
    <dbReference type="NCBI Taxonomy" id="9986"/>
    <lineage>
        <taxon>Eukaryota</taxon>
        <taxon>Metazoa</taxon>
        <taxon>Chordata</taxon>
        <taxon>Craniata</taxon>
        <taxon>Vertebrata</taxon>
        <taxon>Euteleostomi</taxon>
        <taxon>Mammalia</taxon>
        <taxon>Eutheria</taxon>
        <taxon>Euarchontoglires</taxon>
        <taxon>Glires</taxon>
        <taxon>Lagomorpha</taxon>
        <taxon>Leporidae</taxon>
        <taxon>Oryctolagus</taxon>
    </lineage>
</organism>
<proteinExistence type="evidence at transcript level"/>
<name>FPR1_RABIT</name>
<sequence length="352" mass="38675">MDSNASLPLNVSGGTQATPAGLVVLDVFSYLILVVTFVLGVLGNGLVIWVTGFRMTHTVTTISYLNLALADFSFTSTLPFFIVTKALGGHWPFGWFLCKFVFTIVDINLFGSVFLIALIALDRCICVLHPVWAQNHRNVSLAKKVIVGPWICALLLTLPVIIRVTTLSHPRAPGKMACTFDWSPWTEDPAEKLKVAISMFMVRGIIRFIIGFSTPMSIVAVCYGLIATKIHRQGLIKSSRPLRVLSFVVASFLLCWSPYQIAALIATVRIRELLLGMGKDLRIVLDVTSFVAFFNSCLNPMLYVFMGQDFRERLIHSLPASLERALSEDSAQTSDTGTNSTSAPAEAELQAI</sequence>
<accession>Q05394</accession>